<sequence length="340" mass="39215">MKEVIQDKLGRPIRDLRISVTDRCNFRCDYCMPKEIFGDDYTFLPKNELLTFEELTRISKIYAQLGVKKIRITGGEPLLRRNLYKLVEQLNLIDGIEDIGLTTNGLLLKKHGKNLYQAGLRRINVSLDAIEDNVFQEINNRNIKASTILEQIDYAVSIGFEVKVNVVIQKGVNDNQIIPMIDYFKNKNIEVRFIEFMDVGNDNGWNFNKVVTKEEMLNMIEQHFEISPVAPKYYGEVAKYFRHKDSDAQFGLITSVSESFCSTCTRARLSSDGKFYGCLFASSEGFDVKALIRNGATDDDLKAQFKRLWSIRNDQYSDKRTMQTIENNRKKKINMNYIGG</sequence>
<reference key="1">
    <citation type="journal article" date="2003" name="Mol. Microbiol.">
        <title>Genome-based analysis of virulence genes in a non-biofilm-forming Staphylococcus epidermidis strain (ATCC 12228).</title>
        <authorList>
            <person name="Zhang Y.-Q."/>
            <person name="Ren S.-X."/>
            <person name="Li H.-L."/>
            <person name="Wang Y.-X."/>
            <person name="Fu G."/>
            <person name="Yang J."/>
            <person name="Qin Z.-Q."/>
            <person name="Miao Y.-G."/>
            <person name="Wang W.-Y."/>
            <person name="Chen R.-S."/>
            <person name="Shen Y."/>
            <person name="Chen Z."/>
            <person name="Yuan Z.-H."/>
            <person name="Zhao G.-P."/>
            <person name="Qu D."/>
            <person name="Danchin A."/>
            <person name="Wen Y.-M."/>
        </authorList>
    </citation>
    <scope>NUCLEOTIDE SEQUENCE [LARGE SCALE GENOMIC DNA]</scope>
    <source>
        <strain>ATCC 12228 / FDA PCI 1200</strain>
    </source>
</reference>
<accession>Q8CNE6</accession>
<comment type="function">
    <text evidence="1">Catalyzes the cyclization of GTP to (8S)-3',8-cyclo-7,8-dihydroguanosine 5'-triphosphate.</text>
</comment>
<comment type="catalytic activity">
    <reaction evidence="1">
        <text>GTP + AH2 + S-adenosyl-L-methionine = (8S)-3',8-cyclo-7,8-dihydroguanosine 5'-triphosphate + 5'-deoxyadenosine + L-methionine + A + H(+)</text>
        <dbReference type="Rhea" id="RHEA:49576"/>
        <dbReference type="ChEBI" id="CHEBI:13193"/>
        <dbReference type="ChEBI" id="CHEBI:15378"/>
        <dbReference type="ChEBI" id="CHEBI:17319"/>
        <dbReference type="ChEBI" id="CHEBI:17499"/>
        <dbReference type="ChEBI" id="CHEBI:37565"/>
        <dbReference type="ChEBI" id="CHEBI:57844"/>
        <dbReference type="ChEBI" id="CHEBI:59789"/>
        <dbReference type="ChEBI" id="CHEBI:131766"/>
        <dbReference type="EC" id="4.1.99.22"/>
    </reaction>
</comment>
<comment type="cofactor">
    <cofactor evidence="1">
        <name>[4Fe-4S] cluster</name>
        <dbReference type="ChEBI" id="CHEBI:49883"/>
    </cofactor>
    <text evidence="1">Binds 2 [4Fe-4S] clusters. Binds 1 [4Fe-4S] cluster coordinated with 3 cysteines and an exchangeable S-adenosyl-L-methionine and 1 [4Fe-4S] cluster coordinated with 3 cysteines and the GTP-derived substrate.</text>
</comment>
<comment type="pathway">
    <text evidence="1">Cofactor biosynthesis; molybdopterin biosynthesis.</text>
</comment>
<comment type="subunit">
    <text evidence="1">Monomer and homodimer.</text>
</comment>
<comment type="similarity">
    <text evidence="1">Belongs to the radical SAM superfamily. MoaA family.</text>
</comment>
<name>MOAA_STAES</name>
<proteinExistence type="inferred from homology"/>
<protein>
    <recommendedName>
        <fullName evidence="1">GTP 3',8-cyclase</fullName>
        <ecNumber evidence="1">4.1.99.22</ecNumber>
    </recommendedName>
    <alternativeName>
        <fullName evidence="1">Molybdenum cofactor biosynthesis protein A</fullName>
    </alternativeName>
</protein>
<keyword id="KW-0004">4Fe-4S</keyword>
<keyword id="KW-0342">GTP-binding</keyword>
<keyword id="KW-0408">Iron</keyword>
<keyword id="KW-0411">Iron-sulfur</keyword>
<keyword id="KW-0456">Lyase</keyword>
<keyword id="KW-0479">Metal-binding</keyword>
<keyword id="KW-0501">Molybdenum cofactor biosynthesis</keyword>
<keyword id="KW-0547">Nucleotide-binding</keyword>
<keyword id="KW-0949">S-adenosyl-L-methionine</keyword>
<gene>
    <name evidence="1" type="primary">moaA</name>
    <name type="ordered locus">SE_1841</name>
</gene>
<feature type="chain" id="PRO_0000152997" description="GTP 3',8-cyclase">
    <location>
        <begin position="1"/>
        <end position="340"/>
    </location>
</feature>
<feature type="domain" description="Radical SAM core" evidence="2">
    <location>
        <begin position="8"/>
        <end position="229"/>
    </location>
</feature>
<feature type="binding site" evidence="1">
    <location>
        <position position="17"/>
    </location>
    <ligand>
        <name>GTP</name>
        <dbReference type="ChEBI" id="CHEBI:37565"/>
    </ligand>
</feature>
<feature type="binding site" evidence="1">
    <location>
        <position position="24"/>
    </location>
    <ligand>
        <name>[4Fe-4S] cluster</name>
        <dbReference type="ChEBI" id="CHEBI:49883"/>
        <label>1</label>
        <note>4Fe-4S-S-AdoMet</note>
    </ligand>
</feature>
<feature type="binding site" evidence="1">
    <location>
        <position position="28"/>
    </location>
    <ligand>
        <name>[4Fe-4S] cluster</name>
        <dbReference type="ChEBI" id="CHEBI:49883"/>
        <label>1</label>
        <note>4Fe-4S-S-AdoMet</note>
    </ligand>
</feature>
<feature type="binding site" evidence="1">
    <location>
        <position position="30"/>
    </location>
    <ligand>
        <name>S-adenosyl-L-methionine</name>
        <dbReference type="ChEBI" id="CHEBI:59789"/>
    </ligand>
</feature>
<feature type="binding site" evidence="1">
    <location>
        <position position="31"/>
    </location>
    <ligand>
        <name>[4Fe-4S] cluster</name>
        <dbReference type="ChEBI" id="CHEBI:49883"/>
        <label>1</label>
        <note>4Fe-4S-S-AdoMet</note>
    </ligand>
</feature>
<feature type="binding site" evidence="1">
    <location>
        <position position="71"/>
    </location>
    <ligand>
        <name>GTP</name>
        <dbReference type="ChEBI" id="CHEBI:37565"/>
    </ligand>
</feature>
<feature type="binding site" evidence="1">
    <location>
        <position position="75"/>
    </location>
    <ligand>
        <name>S-adenosyl-L-methionine</name>
        <dbReference type="ChEBI" id="CHEBI:59789"/>
    </ligand>
</feature>
<feature type="binding site" evidence="1">
    <location>
        <position position="102"/>
    </location>
    <ligand>
        <name>GTP</name>
        <dbReference type="ChEBI" id="CHEBI:37565"/>
    </ligand>
</feature>
<feature type="binding site" evidence="1">
    <location>
        <position position="126"/>
    </location>
    <ligand>
        <name>S-adenosyl-L-methionine</name>
        <dbReference type="ChEBI" id="CHEBI:59789"/>
    </ligand>
</feature>
<feature type="binding site" evidence="1">
    <location>
        <position position="163"/>
    </location>
    <ligand>
        <name>GTP</name>
        <dbReference type="ChEBI" id="CHEBI:37565"/>
    </ligand>
</feature>
<feature type="binding site" evidence="1">
    <location>
        <position position="197"/>
    </location>
    <ligand>
        <name>S-adenosyl-L-methionine</name>
        <dbReference type="ChEBI" id="CHEBI:59789"/>
    </ligand>
</feature>
<feature type="binding site" evidence="1">
    <location>
        <position position="261"/>
    </location>
    <ligand>
        <name>[4Fe-4S] cluster</name>
        <dbReference type="ChEBI" id="CHEBI:49883"/>
        <label>2</label>
        <note>4Fe-4S-substrate</note>
    </ligand>
</feature>
<feature type="binding site" evidence="1">
    <location>
        <position position="264"/>
    </location>
    <ligand>
        <name>[4Fe-4S] cluster</name>
        <dbReference type="ChEBI" id="CHEBI:49883"/>
        <label>2</label>
        <note>4Fe-4S-substrate</note>
    </ligand>
</feature>
<feature type="binding site" evidence="1">
    <location>
        <begin position="266"/>
        <end position="268"/>
    </location>
    <ligand>
        <name>GTP</name>
        <dbReference type="ChEBI" id="CHEBI:37565"/>
    </ligand>
</feature>
<feature type="binding site" evidence="1">
    <location>
        <position position="278"/>
    </location>
    <ligand>
        <name>[4Fe-4S] cluster</name>
        <dbReference type="ChEBI" id="CHEBI:49883"/>
        <label>2</label>
        <note>4Fe-4S-substrate</note>
    </ligand>
</feature>
<evidence type="ECO:0000255" key="1">
    <source>
        <dbReference type="HAMAP-Rule" id="MF_01225"/>
    </source>
</evidence>
<evidence type="ECO:0000255" key="2">
    <source>
        <dbReference type="PROSITE-ProRule" id="PRU01266"/>
    </source>
</evidence>
<organism>
    <name type="scientific">Staphylococcus epidermidis (strain ATCC 12228 / FDA PCI 1200)</name>
    <dbReference type="NCBI Taxonomy" id="176280"/>
    <lineage>
        <taxon>Bacteria</taxon>
        <taxon>Bacillati</taxon>
        <taxon>Bacillota</taxon>
        <taxon>Bacilli</taxon>
        <taxon>Bacillales</taxon>
        <taxon>Staphylococcaceae</taxon>
        <taxon>Staphylococcus</taxon>
    </lineage>
</organism>
<dbReference type="EC" id="4.1.99.22" evidence="1"/>
<dbReference type="EMBL" id="AE015929">
    <property type="protein sequence ID" value="AAO05482.1"/>
    <property type="molecule type" value="Genomic_DNA"/>
</dbReference>
<dbReference type="RefSeq" id="NP_765396.1">
    <property type="nucleotide sequence ID" value="NC_004461.1"/>
</dbReference>
<dbReference type="RefSeq" id="WP_002438521.1">
    <property type="nucleotide sequence ID" value="NZ_WBME01000034.1"/>
</dbReference>
<dbReference type="SMR" id="Q8CNE6"/>
<dbReference type="GeneID" id="50018055"/>
<dbReference type="KEGG" id="sep:SE_1841"/>
<dbReference type="PATRIC" id="fig|176280.10.peg.1799"/>
<dbReference type="eggNOG" id="COG2896">
    <property type="taxonomic scope" value="Bacteria"/>
</dbReference>
<dbReference type="HOGENOM" id="CLU_009273_0_1_9"/>
<dbReference type="OrthoDB" id="9763993at2"/>
<dbReference type="UniPathway" id="UPA00344"/>
<dbReference type="Proteomes" id="UP000001411">
    <property type="component" value="Chromosome"/>
</dbReference>
<dbReference type="GO" id="GO:0051539">
    <property type="term" value="F:4 iron, 4 sulfur cluster binding"/>
    <property type="evidence" value="ECO:0007669"/>
    <property type="project" value="UniProtKB-UniRule"/>
</dbReference>
<dbReference type="GO" id="GO:0061799">
    <property type="term" value="F:cyclic pyranopterin monophosphate synthase activity"/>
    <property type="evidence" value="ECO:0007669"/>
    <property type="project" value="TreeGrafter"/>
</dbReference>
<dbReference type="GO" id="GO:0061798">
    <property type="term" value="F:GTP 3',8'-cyclase activity"/>
    <property type="evidence" value="ECO:0007669"/>
    <property type="project" value="UniProtKB-UniRule"/>
</dbReference>
<dbReference type="GO" id="GO:0005525">
    <property type="term" value="F:GTP binding"/>
    <property type="evidence" value="ECO:0007669"/>
    <property type="project" value="UniProtKB-UniRule"/>
</dbReference>
<dbReference type="GO" id="GO:0046872">
    <property type="term" value="F:metal ion binding"/>
    <property type="evidence" value="ECO:0007669"/>
    <property type="project" value="UniProtKB-KW"/>
</dbReference>
<dbReference type="GO" id="GO:1904047">
    <property type="term" value="F:S-adenosyl-L-methionine binding"/>
    <property type="evidence" value="ECO:0007669"/>
    <property type="project" value="UniProtKB-UniRule"/>
</dbReference>
<dbReference type="GO" id="GO:0006777">
    <property type="term" value="P:Mo-molybdopterin cofactor biosynthetic process"/>
    <property type="evidence" value="ECO:0007669"/>
    <property type="project" value="UniProtKB-UniRule"/>
</dbReference>
<dbReference type="CDD" id="cd01335">
    <property type="entry name" value="Radical_SAM"/>
    <property type="match status" value="1"/>
</dbReference>
<dbReference type="CDD" id="cd21117">
    <property type="entry name" value="Twitch_MoaA"/>
    <property type="match status" value="1"/>
</dbReference>
<dbReference type="Gene3D" id="3.20.20.70">
    <property type="entry name" value="Aldolase class I"/>
    <property type="match status" value="1"/>
</dbReference>
<dbReference type="HAMAP" id="MF_01225_B">
    <property type="entry name" value="MoaA_B"/>
    <property type="match status" value="1"/>
</dbReference>
<dbReference type="InterPro" id="IPR013785">
    <property type="entry name" value="Aldolase_TIM"/>
</dbReference>
<dbReference type="InterPro" id="IPR006638">
    <property type="entry name" value="Elp3/MiaA/NifB-like_rSAM"/>
</dbReference>
<dbReference type="InterPro" id="IPR013483">
    <property type="entry name" value="MoaA"/>
</dbReference>
<dbReference type="InterPro" id="IPR000385">
    <property type="entry name" value="MoaA_NifB_PqqE_Fe-S-bd_CS"/>
</dbReference>
<dbReference type="InterPro" id="IPR010505">
    <property type="entry name" value="MoaA_twitch"/>
</dbReference>
<dbReference type="InterPro" id="IPR050105">
    <property type="entry name" value="MoCo_biosynth_MoaA/MoaC"/>
</dbReference>
<dbReference type="InterPro" id="IPR007197">
    <property type="entry name" value="rSAM"/>
</dbReference>
<dbReference type="NCBIfam" id="TIGR02666">
    <property type="entry name" value="moaA"/>
    <property type="match status" value="1"/>
</dbReference>
<dbReference type="PANTHER" id="PTHR22960:SF0">
    <property type="entry name" value="MOLYBDENUM COFACTOR BIOSYNTHESIS PROTEIN 1"/>
    <property type="match status" value="1"/>
</dbReference>
<dbReference type="PANTHER" id="PTHR22960">
    <property type="entry name" value="MOLYBDOPTERIN COFACTOR SYNTHESIS PROTEIN A"/>
    <property type="match status" value="1"/>
</dbReference>
<dbReference type="Pfam" id="PF13353">
    <property type="entry name" value="Fer4_12"/>
    <property type="match status" value="1"/>
</dbReference>
<dbReference type="Pfam" id="PF06463">
    <property type="entry name" value="Mob_synth_C"/>
    <property type="match status" value="1"/>
</dbReference>
<dbReference type="Pfam" id="PF04055">
    <property type="entry name" value="Radical_SAM"/>
    <property type="match status" value="1"/>
</dbReference>
<dbReference type="SFLD" id="SFLDG01383">
    <property type="entry name" value="cyclic_pyranopterin_phosphate"/>
    <property type="match status" value="1"/>
</dbReference>
<dbReference type="SFLD" id="SFLDG01386">
    <property type="entry name" value="main_SPASM_domain-containing"/>
    <property type="match status" value="1"/>
</dbReference>
<dbReference type="SMART" id="SM00729">
    <property type="entry name" value="Elp3"/>
    <property type="match status" value="1"/>
</dbReference>
<dbReference type="SUPFAM" id="SSF102114">
    <property type="entry name" value="Radical SAM enzymes"/>
    <property type="match status" value="1"/>
</dbReference>
<dbReference type="PROSITE" id="PS01305">
    <property type="entry name" value="MOAA_NIFB_PQQE"/>
    <property type="match status" value="1"/>
</dbReference>
<dbReference type="PROSITE" id="PS51918">
    <property type="entry name" value="RADICAL_SAM"/>
    <property type="match status" value="1"/>
</dbReference>